<feature type="chain" id="PRO_0000455152" description="MFS-rype transporter paaT">
    <location>
        <begin position="1"/>
        <end position="548"/>
    </location>
</feature>
<feature type="transmembrane region" description="Helical" evidence="1">
    <location>
        <begin position="100"/>
        <end position="120"/>
    </location>
</feature>
<feature type="transmembrane region" description="Helical" evidence="1">
    <location>
        <begin position="139"/>
        <end position="159"/>
    </location>
</feature>
<feature type="transmembrane region" description="Helical" evidence="1">
    <location>
        <begin position="174"/>
        <end position="194"/>
    </location>
</feature>
<feature type="transmembrane region" description="Helical" evidence="1">
    <location>
        <begin position="197"/>
        <end position="217"/>
    </location>
</feature>
<feature type="transmembrane region" description="Helical" evidence="1">
    <location>
        <begin position="224"/>
        <end position="244"/>
    </location>
</feature>
<feature type="transmembrane region" description="Helical" evidence="1">
    <location>
        <begin position="256"/>
        <end position="276"/>
    </location>
</feature>
<feature type="transmembrane region" description="Helical" evidence="1">
    <location>
        <begin position="332"/>
        <end position="352"/>
    </location>
</feature>
<feature type="transmembrane region" description="Helical" evidence="1">
    <location>
        <begin position="370"/>
        <end position="390"/>
    </location>
</feature>
<feature type="transmembrane region" description="Helical" evidence="1">
    <location>
        <begin position="411"/>
        <end position="431"/>
    </location>
</feature>
<feature type="transmembrane region" description="Helical" evidence="1">
    <location>
        <begin position="436"/>
        <end position="456"/>
    </location>
</feature>
<feature type="transmembrane region" description="Helical" evidence="1">
    <location>
        <begin position="471"/>
        <end position="493"/>
    </location>
</feature>
<feature type="transmembrane region" description="Helical" evidence="1">
    <location>
        <begin position="505"/>
        <end position="525"/>
    </location>
</feature>
<feature type="region of interest" description="Disordered" evidence="3">
    <location>
        <begin position="1"/>
        <end position="32"/>
    </location>
</feature>
<feature type="short sequence motif" description="Peroxisomal targeting signal" evidence="7">
    <location>
        <begin position="258"/>
        <end position="269"/>
    </location>
</feature>
<feature type="compositionally biased region" description="Basic and acidic residues" evidence="3">
    <location>
        <begin position="1"/>
        <end position="10"/>
    </location>
</feature>
<feature type="compositionally biased region" description="Polar residues" evidence="3">
    <location>
        <begin position="21"/>
        <end position="30"/>
    </location>
</feature>
<feature type="glycosylation site" description="N-linked (GlcNAc...) asparagine" evidence="2">
    <location>
        <position position="70"/>
    </location>
</feature>
<feature type="glycosylation site" description="N-linked (GlcNAc...) asparagine" evidence="2">
    <location>
        <position position="93"/>
    </location>
</feature>
<organism>
    <name type="scientific">Penicillium rubens (strain ATCC 28089 / DSM 1075 / NRRL 1951 / Wisconsin 54-1255)</name>
    <name type="common">Penicillium chrysogenum</name>
    <dbReference type="NCBI Taxonomy" id="500485"/>
    <lineage>
        <taxon>Eukaryota</taxon>
        <taxon>Fungi</taxon>
        <taxon>Dikarya</taxon>
        <taxon>Ascomycota</taxon>
        <taxon>Pezizomycotina</taxon>
        <taxon>Eurotiomycetes</taxon>
        <taxon>Eurotiomycetidae</taxon>
        <taxon>Eurotiales</taxon>
        <taxon>Aspergillaceae</taxon>
        <taxon>Penicillium</taxon>
        <taxon>Penicillium chrysogenum species complex</taxon>
    </lineage>
</organism>
<accession>B6HIC2</accession>
<dbReference type="EMBL" id="AM920436">
    <property type="protein sequence ID" value="CAP95027.1"/>
    <property type="molecule type" value="Genomic_DNA"/>
</dbReference>
<dbReference type="RefSeq" id="XP_002567200.1">
    <property type="nucleotide sequence ID" value="XM_002567154.1"/>
</dbReference>
<dbReference type="TCDB" id="2.A.1.2.78">
    <property type="family name" value="the major facilitator superfamily (mfs)"/>
</dbReference>
<dbReference type="GlyCosmos" id="B6HIC2">
    <property type="glycosylation" value="2 sites, No reported glycans"/>
</dbReference>
<dbReference type="GeneID" id="8305644"/>
<dbReference type="KEGG" id="pcs:N7525_008399"/>
<dbReference type="VEuPathDB" id="FungiDB:PCH_Pc21g01300"/>
<dbReference type="eggNOG" id="KOG0255">
    <property type="taxonomic scope" value="Eukaryota"/>
</dbReference>
<dbReference type="HOGENOM" id="CLU_008455_11_5_1"/>
<dbReference type="OMA" id="PMMLSCW"/>
<dbReference type="OrthoDB" id="6770063at2759"/>
<dbReference type="BioCyc" id="PCHR:PC21G01300-MONOMER"/>
<dbReference type="Proteomes" id="UP000000724">
    <property type="component" value="Contig Pc00c21"/>
</dbReference>
<dbReference type="GO" id="GO:0005778">
    <property type="term" value="C:peroxisomal membrane"/>
    <property type="evidence" value="ECO:0007669"/>
    <property type="project" value="UniProtKB-SubCell"/>
</dbReference>
<dbReference type="GO" id="GO:0005886">
    <property type="term" value="C:plasma membrane"/>
    <property type="evidence" value="ECO:0007669"/>
    <property type="project" value="TreeGrafter"/>
</dbReference>
<dbReference type="GO" id="GO:0022857">
    <property type="term" value="F:transmembrane transporter activity"/>
    <property type="evidence" value="ECO:0007669"/>
    <property type="project" value="InterPro"/>
</dbReference>
<dbReference type="CDD" id="cd17323">
    <property type="entry name" value="MFS_Tpo1_MDR_like"/>
    <property type="match status" value="1"/>
</dbReference>
<dbReference type="FunFam" id="1.20.1250.20:FF:000011">
    <property type="entry name" value="MFS multidrug transporter, putative"/>
    <property type="match status" value="1"/>
</dbReference>
<dbReference type="Gene3D" id="1.20.1250.20">
    <property type="entry name" value="MFS general substrate transporter like domains"/>
    <property type="match status" value="1"/>
</dbReference>
<dbReference type="InterPro" id="IPR011701">
    <property type="entry name" value="MFS"/>
</dbReference>
<dbReference type="InterPro" id="IPR020846">
    <property type="entry name" value="MFS_dom"/>
</dbReference>
<dbReference type="InterPro" id="IPR036259">
    <property type="entry name" value="MFS_trans_sf"/>
</dbReference>
<dbReference type="PANTHER" id="PTHR23502">
    <property type="entry name" value="MAJOR FACILITATOR SUPERFAMILY"/>
    <property type="match status" value="1"/>
</dbReference>
<dbReference type="PANTHER" id="PTHR23502:SF48">
    <property type="entry name" value="MULTIDRUG TRANSPORTER, PUTATIVE (AFU_ORTHOLOGUE AFUA_5G02700)-RELATED"/>
    <property type="match status" value="1"/>
</dbReference>
<dbReference type="Pfam" id="PF07690">
    <property type="entry name" value="MFS_1"/>
    <property type="match status" value="1"/>
</dbReference>
<dbReference type="SUPFAM" id="SSF103473">
    <property type="entry name" value="MFS general substrate transporter"/>
    <property type="match status" value="1"/>
</dbReference>
<dbReference type="PROSITE" id="PS50850">
    <property type="entry name" value="MFS"/>
    <property type="match status" value="1"/>
</dbReference>
<proteinExistence type="inferred from homology"/>
<comment type="function">
    <text evidence="4">MFS-type transporter involved in penicillin production, most likely through the translocation of side-chain precursors (phenylacetic acid and phenoxyacetic acid) from the cytosol to the peroxisomal lumen across the peroxisomal membrane.</text>
</comment>
<comment type="subcellular location">
    <subcellularLocation>
        <location evidence="4">Peroxisome membrane</location>
        <topology evidence="1">Multi-pass membrane protein</topology>
    </subcellularLocation>
    <text evidence="7">Probably recruited to the peroxisomal membrane by pex19.</text>
</comment>
<comment type="domain">
    <text evidence="7">The peroxisomal targeting signal allows recruitment to the peroxisomal membrane by pex19.</text>
</comment>
<comment type="disruption phenotype">
    <text evidence="4">Leads to a clear reduction in benzylpenicillin production.</text>
</comment>
<comment type="similarity">
    <text evidence="6">Belongs to the major facilitator superfamily. DHA1 family. Polyamines/proton antiporter (TC 2.A.1.2.16) subfamily.</text>
</comment>
<reference key="1">
    <citation type="journal article" date="2008" name="Nat. Biotechnol.">
        <title>Genome sequencing and analysis of the filamentous fungus Penicillium chrysogenum.</title>
        <authorList>
            <person name="van den Berg M.A."/>
            <person name="Albang R."/>
            <person name="Albermann K."/>
            <person name="Badger J.H."/>
            <person name="Daran J.-M."/>
            <person name="Driessen A.J.M."/>
            <person name="Garcia-Estrada C."/>
            <person name="Fedorova N.D."/>
            <person name="Harris D.M."/>
            <person name="Heijne W.H.M."/>
            <person name="Joardar V.S."/>
            <person name="Kiel J.A.K.W."/>
            <person name="Kovalchuk A."/>
            <person name="Martin J.F."/>
            <person name="Nierman W.C."/>
            <person name="Nijland J.G."/>
            <person name="Pronk J.T."/>
            <person name="Roubos J.A."/>
            <person name="van der Klei I.J."/>
            <person name="van Peij N.N.M.E."/>
            <person name="Veenhuis M."/>
            <person name="von Doehren H."/>
            <person name="Wagner C."/>
            <person name="Wortman J.R."/>
            <person name="Bovenberg R.A.L."/>
        </authorList>
    </citation>
    <scope>NUCLEOTIDE SEQUENCE [LARGE SCALE GENOMIC DNA]</scope>
    <source>
        <strain>ATCC 28089 / DSM 1075 / NRRL 1951 / Wisconsin 54-1255</strain>
    </source>
</reference>
<reference key="2">
    <citation type="journal article" date="2013" name="Appl. Microbiol. Biotechnol.">
        <title>The transport of phenylacetic acid across the peroxisomal membrane is mediated by the PaaT protein in Penicillium chrysogenum.</title>
        <authorList>
            <person name="Fernandez-Aguado M."/>
            <person name="Ullan R.V."/>
            <person name="Teijeira F."/>
            <person name="Rodriguez-Castro R."/>
            <person name="Martin J.F."/>
        </authorList>
    </citation>
    <scope>FUNCTION</scope>
    <scope>DISRUPTION PHENOTYPE</scope>
    <scope>SUBCELLULAR LOCATION</scope>
    <scope>DOMAIN</scope>
</reference>
<name>PAAT_PENRW</name>
<protein>
    <recommendedName>
        <fullName evidence="5">MFS-rype transporter paaT</fullName>
    </recommendedName>
</protein>
<sequence length="548" mass="60841">MEAPRSDQAHTDATTPMEAIRTTSLGTNNYGPVPDDYLDLPVREVNDGADLREYITETRTGEIIKPIKSNVTGKTEDWKMVTFTIDDPENPKNWSKAFKWYCTMVVAFTCFVVAFCSSVITADVEGPIEEFGIGREASLVVITVFVIGFGLGPMVFAPMSEIVGRRPVYALTLALAVIFVIPCAVSKNIGTLIVCRLIDGIAFSAPMTLVGGTLADLWKSEERGVPMAAFSAAPFIGPAIGPLVGGYLADNCGWRWLYWIQLILAFVAWVMITFTVPETFAPILLKKRAQKLRKAEDDPKYTTETELDARPMGEKLRIFLFRPFQLLFLEPIVLFISLYMSVIYGLLYMFFVAYPIVYMGGKGWSASNTGLMFIPLAIGVIFSACCAPFVNNHYLKVSVAYGGKPPAEKRLIPMMWACWCIPSGLFVFAWTSYPDLHWMGPAMGGFLIGVGVILLYNSANNYLVDTYQHQAASALAAKTFIRSIWGACTVLFTEQMYERLGDQWASTLLAFIGLACCAIPYVFYFKGESIRRFSKFAFSDDEEKAIKA</sequence>
<gene>
    <name evidence="5" type="primary">paaT</name>
    <name type="ORF">Pc21g01300</name>
</gene>
<evidence type="ECO:0000255" key="1"/>
<evidence type="ECO:0000255" key="2">
    <source>
        <dbReference type="PROSITE-ProRule" id="PRU00498"/>
    </source>
</evidence>
<evidence type="ECO:0000256" key="3">
    <source>
        <dbReference type="SAM" id="MobiDB-lite"/>
    </source>
</evidence>
<evidence type="ECO:0000269" key="4">
    <source>
    </source>
</evidence>
<evidence type="ECO:0000303" key="5">
    <source>
    </source>
</evidence>
<evidence type="ECO:0000305" key="6"/>
<evidence type="ECO:0000305" key="7">
    <source>
    </source>
</evidence>
<keyword id="KW-0325">Glycoprotein</keyword>
<keyword id="KW-0472">Membrane</keyword>
<keyword id="KW-0576">Peroxisome</keyword>
<keyword id="KW-1185">Reference proteome</keyword>
<keyword id="KW-0812">Transmembrane</keyword>
<keyword id="KW-1133">Transmembrane helix</keyword>
<keyword id="KW-0813">Transport</keyword>